<sequence>MSTTLAIVRLDPGLPLPSRAHDGDAGVDLYSAEDVELAPGRRALVRTGVAVAVPFGMVGLVHPRSGLATRVGLSIVNSPGTIDAGYRGEIKVALINLDPAAPIVVHRGDRIAQLLVQRVELVELVEVSSFDEAGLASTSRGDGGHGSSGGHASL</sequence>
<comment type="function">
    <text evidence="1">This enzyme is involved in nucleotide metabolism: it produces dUMP, the immediate precursor of thymidine nucleotides and it decreases the intracellular concentration of dUTP so that uracil cannot be incorporated into DNA.</text>
</comment>
<comment type="catalytic activity">
    <reaction evidence="1">
        <text>dUTP + H2O = dUMP + diphosphate + H(+)</text>
        <dbReference type="Rhea" id="RHEA:10248"/>
        <dbReference type="ChEBI" id="CHEBI:15377"/>
        <dbReference type="ChEBI" id="CHEBI:15378"/>
        <dbReference type="ChEBI" id="CHEBI:33019"/>
        <dbReference type="ChEBI" id="CHEBI:61555"/>
        <dbReference type="ChEBI" id="CHEBI:246422"/>
        <dbReference type="EC" id="3.6.1.23"/>
    </reaction>
</comment>
<comment type="cofactor">
    <cofactor evidence="1">
        <name>Mg(2+)</name>
        <dbReference type="ChEBI" id="CHEBI:18420"/>
    </cofactor>
</comment>
<comment type="pathway">
    <text evidence="1">Pyrimidine metabolism; dUMP biosynthesis; dUMP from dCTP (dUTP route): step 2/2.</text>
</comment>
<comment type="subunit">
    <text evidence="1">Homotrimer.</text>
</comment>
<comment type="similarity">
    <text evidence="1">Belongs to the dUTPase family.</text>
</comment>
<protein>
    <recommendedName>
        <fullName evidence="1">Deoxyuridine 5'-triphosphate nucleotidohydrolase</fullName>
        <shortName evidence="1">dUTPase</shortName>
        <ecNumber evidence="1">3.6.1.23</ecNumber>
    </recommendedName>
    <alternativeName>
        <fullName evidence="1">dUTP pyrophosphatase</fullName>
    </alternativeName>
</protein>
<proteinExistence type="inferred from homology"/>
<accession>A5U649</accession>
<feature type="chain" id="PRO_1000015488" description="Deoxyuridine 5'-triphosphate nucleotidohydrolase">
    <location>
        <begin position="1"/>
        <end position="154"/>
    </location>
</feature>
<feature type="binding site" evidence="1">
    <location>
        <begin position="64"/>
        <end position="66"/>
    </location>
    <ligand>
        <name>substrate</name>
    </ligand>
</feature>
<feature type="binding site" evidence="1">
    <location>
        <position position="77"/>
    </location>
    <ligand>
        <name>substrate</name>
    </ligand>
</feature>
<feature type="binding site" evidence="1">
    <location>
        <begin position="81"/>
        <end position="83"/>
    </location>
    <ligand>
        <name>substrate</name>
    </ligand>
</feature>
<feature type="binding site" evidence="1">
    <location>
        <position position="91"/>
    </location>
    <ligand>
        <name>substrate</name>
    </ligand>
</feature>
<reference key="1">
    <citation type="journal article" date="2008" name="PLoS ONE">
        <title>Genetic basis of virulence attenuation revealed by comparative genomic analysis of Mycobacterium tuberculosis strain H37Ra versus H37Rv.</title>
        <authorList>
            <person name="Zheng H."/>
            <person name="Lu L."/>
            <person name="Wang B."/>
            <person name="Pu S."/>
            <person name="Zhang X."/>
            <person name="Zhu G."/>
            <person name="Shi W."/>
            <person name="Zhang L."/>
            <person name="Wang H."/>
            <person name="Wang S."/>
            <person name="Zhao G."/>
            <person name="Zhang Y."/>
        </authorList>
    </citation>
    <scope>NUCLEOTIDE SEQUENCE [LARGE SCALE GENOMIC DNA]</scope>
    <source>
        <strain>ATCC 25177 / H37Ra</strain>
    </source>
</reference>
<keyword id="KW-0378">Hydrolase</keyword>
<keyword id="KW-0460">Magnesium</keyword>
<keyword id="KW-0479">Metal-binding</keyword>
<keyword id="KW-0546">Nucleotide metabolism</keyword>
<keyword id="KW-1185">Reference proteome</keyword>
<name>DUT_MYCTA</name>
<organism>
    <name type="scientific">Mycobacterium tuberculosis (strain ATCC 25177 / H37Ra)</name>
    <dbReference type="NCBI Taxonomy" id="419947"/>
    <lineage>
        <taxon>Bacteria</taxon>
        <taxon>Bacillati</taxon>
        <taxon>Actinomycetota</taxon>
        <taxon>Actinomycetes</taxon>
        <taxon>Mycobacteriales</taxon>
        <taxon>Mycobacteriaceae</taxon>
        <taxon>Mycobacterium</taxon>
        <taxon>Mycobacterium tuberculosis complex</taxon>
    </lineage>
</organism>
<gene>
    <name evidence="1" type="primary">dut</name>
    <name type="ordered locus">MRA_2725</name>
</gene>
<evidence type="ECO:0000255" key="1">
    <source>
        <dbReference type="HAMAP-Rule" id="MF_00116"/>
    </source>
</evidence>
<dbReference type="EC" id="3.6.1.23" evidence="1"/>
<dbReference type="EMBL" id="CP000611">
    <property type="protein sequence ID" value="ABQ74499.1"/>
    <property type="molecule type" value="Genomic_DNA"/>
</dbReference>
<dbReference type="RefSeq" id="WP_003413930.1">
    <property type="nucleotide sequence ID" value="NZ_CP016972.1"/>
</dbReference>
<dbReference type="SMR" id="A5U649"/>
<dbReference type="GeneID" id="45426685"/>
<dbReference type="KEGG" id="mra:MRA_2725"/>
<dbReference type="eggNOG" id="COG0756">
    <property type="taxonomic scope" value="Bacteria"/>
</dbReference>
<dbReference type="HOGENOM" id="CLU_068508_1_3_11"/>
<dbReference type="UniPathway" id="UPA00610">
    <property type="reaction ID" value="UER00666"/>
</dbReference>
<dbReference type="Proteomes" id="UP000001988">
    <property type="component" value="Chromosome"/>
</dbReference>
<dbReference type="GO" id="GO:0004170">
    <property type="term" value="F:dUTP diphosphatase activity"/>
    <property type="evidence" value="ECO:0007669"/>
    <property type="project" value="UniProtKB-UniRule"/>
</dbReference>
<dbReference type="GO" id="GO:0000287">
    <property type="term" value="F:magnesium ion binding"/>
    <property type="evidence" value="ECO:0007669"/>
    <property type="project" value="UniProtKB-UniRule"/>
</dbReference>
<dbReference type="GO" id="GO:0006226">
    <property type="term" value="P:dUMP biosynthetic process"/>
    <property type="evidence" value="ECO:0007669"/>
    <property type="project" value="UniProtKB-UniRule"/>
</dbReference>
<dbReference type="GO" id="GO:0046081">
    <property type="term" value="P:dUTP catabolic process"/>
    <property type="evidence" value="ECO:0007669"/>
    <property type="project" value="InterPro"/>
</dbReference>
<dbReference type="CDD" id="cd07557">
    <property type="entry name" value="trimeric_dUTPase"/>
    <property type="match status" value="1"/>
</dbReference>
<dbReference type="FunFam" id="2.70.40.10:FF:000008">
    <property type="entry name" value="Deoxyuridine 5'-triphosphate nucleotidohydrolase"/>
    <property type="match status" value="1"/>
</dbReference>
<dbReference type="Gene3D" id="2.70.40.10">
    <property type="match status" value="1"/>
</dbReference>
<dbReference type="HAMAP" id="MF_00116">
    <property type="entry name" value="dUTPase_bact"/>
    <property type="match status" value="1"/>
</dbReference>
<dbReference type="InterPro" id="IPR008181">
    <property type="entry name" value="dUTPase"/>
</dbReference>
<dbReference type="InterPro" id="IPR029054">
    <property type="entry name" value="dUTPase-like"/>
</dbReference>
<dbReference type="InterPro" id="IPR036157">
    <property type="entry name" value="dUTPase-like_sf"/>
</dbReference>
<dbReference type="InterPro" id="IPR033704">
    <property type="entry name" value="dUTPase_trimeric"/>
</dbReference>
<dbReference type="NCBIfam" id="TIGR00576">
    <property type="entry name" value="dut"/>
    <property type="match status" value="1"/>
</dbReference>
<dbReference type="NCBIfam" id="NF001862">
    <property type="entry name" value="PRK00601.1"/>
    <property type="match status" value="1"/>
</dbReference>
<dbReference type="PANTHER" id="PTHR11241">
    <property type="entry name" value="DEOXYURIDINE 5'-TRIPHOSPHATE NUCLEOTIDOHYDROLASE"/>
    <property type="match status" value="1"/>
</dbReference>
<dbReference type="PANTHER" id="PTHR11241:SF0">
    <property type="entry name" value="DEOXYURIDINE 5'-TRIPHOSPHATE NUCLEOTIDOHYDROLASE"/>
    <property type="match status" value="1"/>
</dbReference>
<dbReference type="Pfam" id="PF00692">
    <property type="entry name" value="dUTPase"/>
    <property type="match status" value="1"/>
</dbReference>
<dbReference type="SUPFAM" id="SSF51283">
    <property type="entry name" value="dUTPase-like"/>
    <property type="match status" value="1"/>
</dbReference>